<dbReference type="EC" id="7.5.2.11" evidence="1"/>
<dbReference type="EMBL" id="AP008232">
    <property type="protein sequence ID" value="BAE74239.1"/>
    <property type="molecule type" value="Genomic_DNA"/>
</dbReference>
<dbReference type="RefSeq" id="WP_011410825.1">
    <property type="nucleotide sequence ID" value="NC_007712.1"/>
</dbReference>
<dbReference type="SMR" id="Q2NUD6"/>
<dbReference type="STRING" id="343509.SG0964"/>
<dbReference type="KEGG" id="sgl:SG0964"/>
<dbReference type="eggNOG" id="COG1129">
    <property type="taxonomic scope" value="Bacteria"/>
</dbReference>
<dbReference type="HOGENOM" id="CLU_000604_92_3_6"/>
<dbReference type="OrthoDB" id="9776369at2"/>
<dbReference type="BioCyc" id="SGLO343509:SGP1_RS08310-MONOMER"/>
<dbReference type="Proteomes" id="UP000001932">
    <property type="component" value="Chromosome"/>
</dbReference>
<dbReference type="GO" id="GO:0005886">
    <property type="term" value="C:plasma membrane"/>
    <property type="evidence" value="ECO:0007669"/>
    <property type="project" value="UniProtKB-SubCell"/>
</dbReference>
<dbReference type="GO" id="GO:0005524">
    <property type="term" value="F:ATP binding"/>
    <property type="evidence" value="ECO:0007669"/>
    <property type="project" value="UniProtKB-KW"/>
</dbReference>
<dbReference type="GO" id="GO:0016887">
    <property type="term" value="F:ATP hydrolysis activity"/>
    <property type="evidence" value="ECO:0007669"/>
    <property type="project" value="InterPro"/>
</dbReference>
<dbReference type="CDD" id="cd03216">
    <property type="entry name" value="ABC_Carb_Monos_I"/>
    <property type="match status" value="1"/>
</dbReference>
<dbReference type="CDD" id="cd03215">
    <property type="entry name" value="ABC_Carb_Monos_II"/>
    <property type="match status" value="1"/>
</dbReference>
<dbReference type="FunFam" id="3.40.50.300:FF:000126">
    <property type="entry name" value="Galactose/methyl galactoside import ATP-binding protein MglA"/>
    <property type="match status" value="1"/>
</dbReference>
<dbReference type="FunFam" id="3.40.50.300:FF:000127">
    <property type="entry name" value="Ribose import ATP-binding protein RbsA"/>
    <property type="match status" value="1"/>
</dbReference>
<dbReference type="Gene3D" id="3.40.50.300">
    <property type="entry name" value="P-loop containing nucleotide triphosphate hydrolases"/>
    <property type="match status" value="2"/>
</dbReference>
<dbReference type="InterPro" id="IPR003593">
    <property type="entry name" value="AAA+_ATPase"/>
</dbReference>
<dbReference type="InterPro" id="IPR050107">
    <property type="entry name" value="ABC_carbohydrate_import_ATPase"/>
</dbReference>
<dbReference type="InterPro" id="IPR003439">
    <property type="entry name" value="ABC_transporter-like_ATP-bd"/>
</dbReference>
<dbReference type="InterPro" id="IPR017871">
    <property type="entry name" value="ABC_transporter-like_CS"/>
</dbReference>
<dbReference type="InterPro" id="IPR027417">
    <property type="entry name" value="P-loop_NTPase"/>
</dbReference>
<dbReference type="NCBIfam" id="NF008215">
    <property type="entry name" value="PRK10982.1"/>
    <property type="match status" value="1"/>
</dbReference>
<dbReference type="PANTHER" id="PTHR43790">
    <property type="entry name" value="CARBOHYDRATE TRANSPORT ATP-BINDING PROTEIN MG119-RELATED"/>
    <property type="match status" value="1"/>
</dbReference>
<dbReference type="PANTHER" id="PTHR43790:SF7">
    <property type="entry name" value="GALACTOSE_METHYL GALACTOSIDE IMPORT ATP-BINDING PROTEIN MGLA"/>
    <property type="match status" value="1"/>
</dbReference>
<dbReference type="Pfam" id="PF00005">
    <property type="entry name" value="ABC_tran"/>
    <property type="match status" value="2"/>
</dbReference>
<dbReference type="SMART" id="SM00382">
    <property type="entry name" value="AAA"/>
    <property type="match status" value="2"/>
</dbReference>
<dbReference type="SUPFAM" id="SSF52540">
    <property type="entry name" value="P-loop containing nucleoside triphosphate hydrolases"/>
    <property type="match status" value="2"/>
</dbReference>
<dbReference type="PROSITE" id="PS00211">
    <property type="entry name" value="ABC_TRANSPORTER_1"/>
    <property type="match status" value="1"/>
</dbReference>
<dbReference type="PROSITE" id="PS50893">
    <property type="entry name" value="ABC_TRANSPORTER_2"/>
    <property type="match status" value="2"/>
</dbReference>
<dbReference type="PROSITE" id="PS51260">
    <property type="entry name" value="MGLA"/>
    <property type="match status" value="1"/>
</dbReference>
<reference key="1">
    <citation type="journal article" date="2006" name="Genome Res.">
        <title>Massive genome erosion and functional adaptations provide insights into the symbiotic lifestyle of Sodalis glossinidius in the tsetse host.</title>
        <authorList>
            <person name="Toh H."/>
            <person name="Weiss B.L."/>
            <person name="Perkin S.A.H."/>
            <person name="Yamashita A."/>
            <person name="Oshima K."/>
            <person name="Hattori M."/>
            <person name="Aksoy S."/>
        </authorList>
    </citation>
    <scope>NUCLEOTIDE SEQUENCE [LARGE SCALE GENOMIC DNA]</scope>
    <source>
        <strain>morsitans</strain>
    </source>
</reference>
<feature type="chain" id="PRO_0000261375" description="Galactose/methyl galactoside import ATP-binding protein MglA">
    <location>
        <begin position="1"/>
        <end position="506"/>
    </location>
</feature>
<feature type="domain" description="ABC transporter 1" evidence="1">
    <location>
        <begin position="14"/>
        <end position="249"/>
    </location>
</feature>
<feature type="domain" description="ABC transporter 2" evidence="1">
    <location>
        <begin position="264"/>
        <end position="506"/>
    </location>
</feature>
<feature type="binding site" evidence="1">
    <location>
        <begin position="46"/>
        <end position="53"/>
    </location>
    <ligand>
        <name>ATP</name>
        <dbReference type="ChEBI" id="CHEBI:30616"/>
    </ligand>
</feature>
<accession>Q2NUD6</accession>
<sequence>MADITTEQQGEWLLEMKNISKSFPGVKALDNVNLNVRPHSIHALMGENGAGKSTLLKCLFGIYSKDAGSIIFQGQEVNFKNSKEALEQGVSMVHQELNLVLQRTVMDNMWLGRYPRKGMFVDHKKMYQDTKTIFDELDIDIDPRDKGATLSVSQMQIIEIAKAFSYDAKIVIMDEPTSSLTEKEVNHLFSIIRKLKARGCGIVYISHKMEEIFQLCDEITILRDGQWIATQPVEGLSMDQIIAMMVGRSLSQHFPDRISEPGEVMLEVRNLTSLRQPSIRDISFDLHQGEILGIAGLVGARRTDIVETLFGIREKSAGTIRLHGKNIKNSSANEAISHGFALVTEERRATGIYAFLDVGFNSLISNIRSYKNKMGLLNNTRMKSDIQWVINAMRVKTPGHSAHIGSLSGGNQQKVIIGRWLLTQPEILMLDEPTRGIDVGAKFEIYQLMTELAKRGKGIIIISSEMPELLGITDRILVMSNGQMVGMVNTKETSQNEILRLASLYL</sequence>
<proteinExistence type="inferred from homology"/>
<evidence type="ECO:0000255" key="1">
    <source>
        <dbReference type="HAMAP-Rule" id="MF_01717"/>
    </source>
</evidence>
<protein>
    <recommendedName>
        <fullName evidence="1">Galactose/methyl galactoside import ATP-binding protein MglA</fullName>
        <ecNumber evidence="1">7.5.2.11</ecNumber>
    </recommendedName>
</protein>
<keyword id="KW-0067">ATP-binding</keyword>
<keyword id="KW-0997">Cell inner membrane</keyword>
<keyword id="KW-1003">Cell membrane</keyword>
<keyword id="KW-0472">Membrane</keyword>
<keyword id="KW-0547">Nucleotide-binding</keyword>
<keyword id="KW-0677">Repeat</keyword>
<keyword id="KW-0762">Sugar transport</keyword>
<keyword id="KW-1278">Translocase</keyword>
<keyword id="KW-0813">Transport</keyword>
<name>MGLA_SODGM</name>
<comment type="function">
    <text evidence="1">Part of the ABC transporter complex MglABC involved in galactose/methyl galactoside import. Responsible for energy coupling to the transport system.</text>
</comment>
<comment type="catalytic activity">
    <reaction evidence="1">
        <text>D-galactose(out) + ATP + H2O = D-galactose(in) + ADP + phosphate + H(+)</text>
        <dbReference type="Rhea" id="RHEA:60156"/>
        <dbReference type="ChEBI" id="CHEBI:4139"/>
        <dbReference type="ChEBI" id="CHEBI:15377"/>
        <dbReference type="ChEBI" id="CHEBI:15378"/>
        <dbReference type="ChEBI" id="CHEBI:30616"/>
        <dbReference type="ChEBI" id="CHEBI:43474"/>
        <dbReference type="ChEBI" id="CHEBI:456216"/>
        <dbReference type="EC" id="7.5.2.11"/>
    </reaction>
    <physiologicalReaction direction="left-to-right" evidence="1">
        <dbReference type="Rhea" id="RHEA:60157"/>
    </physiologicalReaction>
</comment>
<comment type="catalytic activity">
    <reaction evidence="1">
        <text>methyl beta-D-galactoside(out) + ATP + H2O = methyl beta-D-galactoside(in) + ADP + phosphate + H(+)</text>
        <dbReference type="Rhea" id="RHEA:72531"/>
        <dbReference type="ChEBI" id="CHEBI:15377"/>
        <dbReference type="ChEBI" id="CHEBI:15378"/>
        <dbReference type="ChEBI" id="CHEBI:17540"/>
        <dbReference type="ChEBI" id="CHEBI:30616"/>
        <dbReference type="ChEBI" id="CHEBI:43474"/>
        <dbReference type="ChEBI" id="CHEBI:456216"/>
    </reaction>
    <physiologicalReaction direction="left-to-right" evidence="1">
        <dbReference type="Rhea" id="RHEA:72532"/>
    </physiologicalReaction>
</comment>
<comment type="subunit">
    <text evidence="1">The complex is composed of one ATP-binding protein (MglA), two transmembrane proteins (MglC) and a solute-binding protein (MglB).</text>
</comment>
<comment type="subcellular location">
    <subcellularLocation>
        <location evidence="1">Cell inner membrane</location>
        <topology evidence="1">Peripheral membrane protein</topology>
    </subcellularLocation>
</comment>
<comment type="similarity">
    <text evidence="1">Belongs to the ABC transporter superfamily. Galactose/methyl galactoside importer (TC 3.A.1.2.3) family.</text>
</comment>
<organism>
    <name type="scientific">Sodalis glossinidius (strain morsitans)</name>
    <dbReference type="NCBI Taxonomy" id="343509"/>
    <lineage>
        <taxon>Bacteria</taxon>
        <taxon>Pseudomonadati</taxon>
        <taxon>Pseudomonadota</taxon>
        <taxon>Gammaproteobacteria</taxon>
        <taxon>Enterobacterales</taxon>
        <taxon>Bruguierivoracaceae</taxon>
        <taxon>Sodalis</taxon>
    </lineage>
</organism>
<gene>
    <name evidence="1" type="primary">mglA</name>
    <name type="ordered locus">SG0964</name>
</gene>